<proteinExistence type="inferred from homology"/>
<keyword id="KW-0067">ATP-binding</keyword>
<keyword id="KW-0227">DNA damage</keyword>
<keyword id="KW-0233">DNA recombination</keyword>
<keyword id="KW-0238">DNA-binding</keyword>
<keyword id="KW-0547">Nucleotide-binding</keyword>
<dbReference type="EMBL" id="BA000011">
    <property type="protein sequence ID" value="BAB59598.1"/>
    <property type="molecule type" value="Genomic_DNA"/>
</dbReference>
<dbReference type="RefSeq" id="WP_010916715.1">
    <property type="nucleotide sequence ID" value="NC_002689.2"/>
</dbReference>
<dbReference type="SMR" id="Q97BJ9"/>
<dbReference type="STRING" id="273116.gene:9381237"/>
<dbReference type="PaxDb" id="273116-14324671"/>
<dbReference type="GeneID" id="1440973"/>
<dbReference type="KEGG" id="tvo:TVG0443339"/>
<dbReference type="eggNOG" id="arCOG00415">
    <property type="taxonomic scope" value="Archaea"/>
</dbReference>
<dbReference type="HOGENOM" id="CLU_041732_0_0_2"/>
<dbReference type="OrthoDB" id="31129at2157"/>
<dbReference type="PhylomeDB" id="Q97BJ9"/>
<dbReference type="Proteomes" id="UP000001017">
    <property type="component" value="Chromosome"/>
</dbReference>
<dbReference type="GO" id="GO:0005524">
    <property type="term" value="F:ATP binding"/>
    <property type="evidence" value="ECO:0007669"/>
    <property type="project" value="UniProtKB-UniRule"/>
</dbReference>
<dbReference type="GO" id="GO:0016887">
    <property type="term" value="F:ATP hydrolysis activity"/>
    <property type="evidence" value="ECO:0007669"/>
    <property type="project" value="InterPro"/>
</dbReference>
<dbReference type="GO" id="GO:0140664">
    <property type="term" value="F:ATP-dependent DNA damage sensor activity"/>
    <property type="evidence" value="ECO:0007669"/>
    <property type="project" value="InterPro"/>
</dbReference>
<dbReference type="GO" id="GO:0003684">
    <property type="term" value="F:damaged DNA binding"/>
    <property type="evidence" value="ECO:0007669"/>
    <property type="project" value="UniProtKB-UniRule"/>
</dbReference>
<dbReference type="GO" id="GO:0006310">
    <property type="term" value="P:DNA recombination"/>
    <property type="evidence" value="ECO:0007669"/>
    <property type="project" value="UniProtKB-UniRule"/>
</dbReference>
<dbReference type="GO" id="GO:0006281">
    <property type="term" value="P:DNA repair"/>
    <property type="evidence" value="ECO:0007669"/>
    <property type="project" value="UniProtKB-UniRule"/>
</dbReference>
<dbReference type="CDD" id="cd19515">
    <property type="entry name" value="archRadA"/>
    <property type="match status" value="1"/>
</dbReference>
<dbReference type="FunFam" id="3.40.50.300:FF:002052">
    <property type="entry name" value="DNA repair protein RAD51 homolog"/>
    <property type="match status" value="1"/>
</dbReference>
<dbReference type="Gene3D" id="1.10.150.20">
    <property type="entry name" value="5' to 3' exonuclease, C-terminal subdomain"/>
    <property type="match status" value="1"/>
</dbReference>
<dbReference type="Gene3D" id="3.40.50.300">
    <property type="entry name" value="P-loop containing nucleotide triphosphate hydrolases"/>
    <property type="match status" value="1"/>
</dbReference>
<dbReference type="HAMAP" id="MF_00348">
    <property type="entry name" value="RadA_arch"/>
    <property type="match status" value="1"/>
</dbReference>
<dbReference type="InterPro" id="IPR003593">
    <property type="entry name" value="AAA+_ATPase"/>
</dbReference>
<dbReference type="InterPro" id="IPR013632">
    <property type="entry name" value="DNA_recomb/repair_Rad51_C"/>
</dbReference>
<dbReference type="InterPro" id="IPR011938">
    <property type="entry name" value="DNA_recomb/repair_RadA"/>
</dbReference>
<dbReference type="InterPro" id="IPR016467">
    <property type="entry name" value="DNA_recomb/repair_RecA-like"/>
</dbReference>
<dbReference type="InterPro" id="IPR010995">
    <property type="entry name" value="DNA_repair_Rad51/TF_NusA_a-hlx"/>
</dbReference>
<dbReference type="InterPro" id="IPR003583">
    <property type="entry name" value="Hlx-hairpin-Hlx_DNA-bd_motif"/>
</dbReference>
<dbReference type="InterPro" id="IPR027417">
    <property type="entry name" value="P-loop_NTPase"/>
</dbReference>
<dbReference type="InterPro" id="IPR020588">
    <property type="entry name" value="RecA_ATP-bd"/>
</dbReference>
<dbReference type="InterPro" id="IPR020587">
    <property type="entry name" value="RecA_monomer-monomer_interface"/>
</dbReference>
<dbReference type="NCBIfam" id="NF003301">
    <property type="entry name" value="PRK04301.1"/>
    <property type="match status" value="1"/>
</dbReference>
<dbReference type="NCBIfam" id="TIGR02236">
    <property type="entry name" value="recomb_radA"/>
    <property type="match status" value="1"/>
</dbReference>
<dbReference type="PANTHER" id="PTHR22942:SF30">
    <property type="entry name" value="MEIOTIC RECOMBINATION PROTEIN DMC1_LIM15 HOMOLOG"/>
    <property type="match status" value="1"/>
</dbReference>
<dbReference type="PANTHER" id="PTHR22942">
    <property type="entry name" value="RECA/RAD51/RADA DNA STRAND-PAIRING FAMILY MEMBER"/>
    <property type="match status" value="1"/>
</dbReference>
<dbReference type="Pfam" id="PF14520">
    <property type="entry name" value="HHH_5"/>
    <property type="match status" value="1"/>
</dbReference>
<dbReference type="Pfam" id="PF08423">
    <property type="entry name" value="Rad51"/>
    <property type="match status" value="1"/>
</dbReference>
<dbReference type="PIRSF" id="PIRSF005856">
    <property type="entry name" value="Rad51"/>
    <property type="match status" value="1"/>
</dbReference>
<dbReference type="SMART" id="SM00382">
    <property type="entry name" value="AAA"/>
    <property type="match status" value="1"/>
</dbReference>
<dbReference type="SMART" id="SM00278">
    <property type="entry name" value="HhH1"/>
    <property type="match status" value="2"/>
</dbReference>
<dbReference type="SUPFAM" id="SSF52540">
    <property type="entry name" value="P-loop containing nucleoside triphosphate hydrolases"/>
    <property type="match status" value="1"/>
</dbReference>
<dbReference type="SUPFAM" id="SSF47794">
    <property type="entry name" value="Rad51 N-terminal domain-like"/>
    <property type="match status" value="1"/>
</dbReference>
<dbReference type="PROSITE" id="PS50162">
    <property type="entry name" value="RECA_2"/>
    <property type="match status" value="1"/>
</dbReference>
<dbReference type="PROSITE" id="PS50163">
    <property type="entry name" value="RECA_3"/>
    <property type="match status" value="1"/>
</dbReference>
<gene>
    <name evidence="1" type="primary">radA</name>
    <name type="ordered locus">TV0456</name>
    <name type="ORF">TVG0443339</name>
</gene>
<accession>Q97BJ9</accession>
<protein>
    <recommendedName>
        <fullName evidence="1">DNA repair and recombination protein RadA</fullName>
    </recommendedName>
</protein>
<evidence type="ECO:0000255" key="1">
    <source>
        <dbReference type="HAMAP-Rule" id="MF_00348"/>
    </source>
</evidence>
<organism>
    <name type="scientific">Thermoplasma volcanium (strain ATCC 51530 / DSM 4299 / JCM 9571 / NBRC 15438 / GSS1)</name>
    <dbReference type="NCBI Taxonomy" id="273116"/>
    <lineage>
        <taxon>Archaea</taxon>
        <taxon>Methanobacteriati</taxon>
        <taxon>Thermoplasmatota</taxon>
        <taxon>Thermoplasmata</taxon>
        <taxon>Thermoplasmatales</taxon>
        <taxon>Thermoplasmataceae</taxon>
        <taxon>Thermoplasma</taxon>
    </lineage>
</organism>
<sequence>MEDNEENKEKKTTLEDLPGVGEATAEKLRENGYDDIMAIAVASPKDLSDVTGIGEGAAAKIIAAARKFADIGNFETGEEILERRKTIQKLTTGSKNLDDLLGGGLETQAITEFFGEFGSGKTQIMHQLAVNCTMPKEKGGFDSDVMMIDTENTFRPERIIQMAKSKGLDPDETLKRIHVARAYNSHHQILLAEKAQETAKEFNIRLLIVDSLTAHFRSEYVGRGSLAERQQLLNKHMHDLLRFGTIYNAVIAVTNQVSARPDVFFGDPMAPIGGNIVGHTATFRVYLRKSKGGKRIARLIDSPYLPEGETVIQISEEGVNDGT</sequence>
<reference key="1">
    <citation type="journal article" date="2000" name="Proc. Natl. Acad. Sci. U.S.A.">
        <title>Archaeal adaptation to higher temperatures revealed by genomic sequence of Thermoplasma volcanium.</title>
        <authorList>
            <person name="Kawashima T."/>
            <person name="Amano N."/>
            <person name="Koike H."/>
            <person name="Makino S."/>
            <person name="Higuchi S."/>
            <person name="Kawashima-Ohya Y."/>
            <person name="Watanabe K."/>
            <person name="Yamazaki M."/>
            <person name="Kanehori K."/>
            <person name="Kawamoto T."/>
            <person name="Nunoshiba T."/>
            <person name="Yamamoto Y."/>
            <person name="Aramaki H."/>
            <person name="Makino K."/>
            <person name="Suzuki M."/>
        </authorList>
    </citation>
    <scope>NUCLEOTIDE SEQUENCE [LARGE SCALE GENOMIC DNA]</scope>
    <source>
        <strain>ATCC 51530 / DSM 4299 / JCM 9571 / NBRC 15438 / GSS1</strain>
    </source>
</reference>
<name>RADA_THEVO</name>
<comment type="function">
    <text evidence="1">Involved in DNA repair and in homologous recombination. Binds and assemble on single-stranded DNA to form a nucleoprotein filament. Hydrolyzes ATP in a ssDNA-dependent manner and promotes DNA strand exchange between homologous DNA molecules.</text>
</comment>
<comment type="similarity">
    <text evidence="1">Belongs to the eukaryotic RecA-like protein family.</text>
</comment>
<feature type="chain" id="PRO_0000150110" description="DNA repair and recombination protein RadA">
    <location>
        <begin position="1"/>
        <end position="323"/>
    </location>
</feature>
<feature type="binding site" evidence="1">
    <location>
        <begin position="115"/>
        <end position="122"/>
    </location>
    <ligand>
        <name>ATP</name>
        <dbReference type="ChEBI" id="CHEBI:30616"/>
    </ligand>
</feature>